<accession>Q39211</accession>
<feature type="chain" id="PRO_0000132745" description="DNA-directed RNA polymerases II, IV and V subunit 3">
    <location>
        <begin position="1"/>
        <end position="319"/>
    </location>
</feature>
<feature type="modified residue" description="N-acetylmethionine" evidence="7">
    <location>
        <position position="1"/>
    </location>
</feature>
<feature type="strand" evidence="8">
    <location>
        <begin position="11"/>
        <end position="17"/>
    </location>
</feature>
<feature type="strand" evidence="8">
    <location>
        <begin position="19"/>
        <end position="29"/>
    </location>
</feature>
<feature type="helix" evidence="8">
    <location>
        <begin position="31"/>
        <end position="43"/>
    </location>
</feature>
<feature type="strand" evidence="8">
    <location>
        <begin position="47"/>
        <end position="57"/>
    </location>
</feature>
<feature type="strand" evidence="8">
    <location>
        <begin position="60"/>
        <end position="62"/>
    </location>
</feature>
<feature type="helix" evidence="8">
    <location>
        <begin position="64"/>
        <end position="72"/>
    </location>
</feature>
<feature type="turn" evidence="8">
    <location>
        <begin position="81"/>
        <end position="83"/>
    </location>
</feature>
<feature type="strand" evidence="8">
    <location>
        <begin position="87"/>
        <end position="89"/>
    </location>
</feature>
<feature type="strand" evidence="8">
    <location>
        <begin position="96"/>
        <end position="98"/>
    </location>
</feature>
<feature type="strand" evidence="8">
    <location>
        <begin position="100"/>
        <end position="112"/>
    </location>
</feature>
<feature type="strand" evidence="8">
    <location>
        <begin position="114"/>
        <end position="116"/>
    </location>
</feature>
<feature type="strand" evidence="8">
    <location>
        <begin position="118"/>
        <end position="120"/>
    </location>
</feature>
<feature type="strand" evidence="8">
    <location>
        <begin position="122"/>
        <end position="124"/>
    </location>
</feature>
<feature type="strand" evidence="8">
    <location>
        <begin position="126"/>
        <end position="129"/>
    </location>
</feature>
<feature type="helix" evidence="9">
    <location>
        <begin position="130"/>
        <end position="132"/>
    </location>
</feature>
<feature type="strand" evidence="8">
    <location>
        <begin position="155"/>
        <end position="157"/>
    </location>
</feature>
<feature type="strand" evidence="8">
    <location>
        <begin position="159"/>
        <end position="172"/>
    </location>
</feature>
<feature type="strand" evidence="8">
    <location>
        <begin position="187"/>
        <end position="196"/>
    </location>
</feature>
<feature type="strand" evidence="8">
    <location>
        <begin position="198"/>
        <end position="200"/>
    </location>
</feature>
<feature type="turn" evidence="9">
    <location>
        <begin position="201"/>
        <end position="203"/>
    </location>
</feature>
<feature type="helix" evidence="8">
    <location>
        <begin position="208"/>
        <end position="214"/>
    </location>
</feature>
<feature type="strand" evidence="8">
    <location>
        <begin position="217"/>
        <end position="219"/>
    </location>
</feature>
<feature type="strand" evidence="8">
    <location>
        <begin position="221"/>
        <end position="223"/>
    </location>
</feature>
<feature type="turn" evidence="8">
    <location>
        <begin position="225"/>
        <end position="227"/>
    </location>
</feature>
<feature type="strand" evidence="8">
    <location>
        <begin position="228"/>
        <end position="232"/>
    </location>
</feature>
<feature type="helix" evidence="9">
    <location>
        <begin position="235"/>
        <end position="237"/>
    </location>
</feature>
<feature type="helix" evidence="8">
    <location>
        <begin position="244"/>
        <end position="250"/>
    </location>
</feature>
<feature type="strand" evidence="8">
    <location>
        <begin position="256"/>
        <end position="272"/>
    </location>
</feature>
<feature type="strand" evidence="8">
    <location>
        <begin position="274"/>
        <end position="276"/>
    </location>
</feature>
<feature type="helix" evidence="8">
    <location>
        <begin position="278"/>
        <end position="302"/>
    </location>
</feature>
<organism>
    <name type="scientific">Arabidopsis thaliana</name>
    <name type="common">Mouse-ear cress</name>
    <dbReference type="NCBI Taxonomy" id="3702"/>
    <lineage>
        <taxon>Eukaryota</taxon>
        <taxon>Viridiplantae</taxon>
        <taxon>Streptophyta</taxon>
        <taxon>Embryophyta</taxon>
        <taxon>Tracheophyta</taxon>
        <taxon>Spermatophyta</taxon>
        <taxon>Magnoliopsida</taxon>
        <taxon>eudicotyledons</taxon>
        <taxon>Gunneridae</taxon>
        <taxon>Pentapetalae</taxon>
        <taxon>rosids</taxon>
        <taxon>malvids</taxon>
        <taxon>Brassicales</taxon>
        <taxon>Brassicaceae</taxon>
        <taxon>Camelineae</taxon>
        <taxon>Arabidopsis</taxon>
    </lineage>
</organism>
<protein>
    <recommendedName>
        <fullName>DNA-directed RNA polymerases II, IV and V subunit 3</fullName>
    </recommendedName>
    <alternativeName>
        <fullName>DNA-directed RNA polymerase II 36 kDa polypeptide A</fullName>
    </alternativeName>
    <alternativeName>
        <fullName>DNA-directed RNA polymerase II subunit RPB3-A</fullName>
        <shortName>RNA polymerase II subunit 3-A</shortName>
        <shortName>RNA polymerase II subunit B3-A</shortName>
    </alternativeName>
</protein>
<proteinExistence type="evidence at protein level"/>
<reference key="1">
    <citation type="journal article" date="1996" name="J. Biol. Chem.">
        <title>Association between 36- and 13.6-kDa alpha-like subunits of Arabidopsis thaliana RNA polymerase II.</title>
        <authorList>
            <person name="Ulmasov T."/>
            <person name="Larkin R.M."/>
            <person name="Guilfoyle T.J."/>
        </authorList>
    </citation>
    <scope>NUCLEOTIDE SEQUENCE [GENOMIC DNA]</scope>
    <scope>INTERACTION WITH NRPB11</scope>
    <source>
        <strain>cv. Columbia</strain>
    </source>
</reference>
<reference key="2">
    <citation type="journal article" date="1999" name="Nature">
        <title>Sequence and analysis of chromosome 2 of the plant Arabidopsis thaliana.</title>
        <authorList>
            <person name="Lin X."/>
            <person name="Kaul S."/>
            <person name="Rounsley S.D."/>
            <person name="Shea T.P."/>
            <person name="Benito M.-I."/>
            <person name="Town C.D."/>
            <person name="Fujii C.Y."/>
            <person name="Mason T.M."/>
            <person name="Bowman C.L."/>
            <person name="Barnstead M.E."/>
            <person name="Feldblyum T.V."/>
            <person name="Buell C.R."/>
            <person name="Ketchum K.A."/>
            <person name="Lee J.J."/>
            <person name="Ronning C.M."/>
            <person name="Koo H.L."/>
            <person name="Moffat K.S."/>
            <person name="Cronin L.A."/>
            <person name="Shen M."/>
            <person name="Pai G."/>
            <person name="Van Aken S."/>
            <person name="Umayam L."/>
            <person name="Tallon L.J."/>
            <person name="Gill J.E."/>
            <person name="Adams M.D."/>
            <person name="Carrera A.J."/>
            <person name="Creasy T.H."/>
            <person name="Goodman H.M."/>
            <person name="Somerville C.R."/>
            <person name="Copenhaver G.P."/>
            <person name="Preuss D."/>
            <person name="Nierman W.C."/>
            <person name="White O."/>
            <person name="Eisen J.A."/>
            <person name="Salzberg S.L."/>
            <person name="Fraser C.M."/>
            <person name="Venter J.C."/>
        </authorList>
    </citation>
    <scope>NUCLEOTIDE SEQUENCE [LARGE SCALE GENOMIC DNA]</scope>
    <source>
        <strain>cv. Columbia</strain>
    </source>
</reference>
<reference key="3">
    <citation type="journal article" date="2017" name="Plant J.">
        <title>Araport11: a complete reannotation of the Arabidopsis thaliana reference genome.</title>
        <authorList>
            <person name="Cheng C.Y."/>
            <person name="Krishnakumar V."/>
            <person name="Chan A.P."/>
            <person name="Thibaud-Nissen F."/>
            <person name="Schobel S."/>
            <person name="Town C.D."/>
        </authorList>
    </citation>
    <scope>GENOME REANNOTATION</scope>
    <source>
        <strain>cv. Columbia</strain>
    </source>
</reference>
<reference key="4">
    <citation type="journal article" date="2003" name="Science">
        <title>Empirical analysis of transcriptional activity in the Arabidopsis genome.</title>
        <authorList>
            <person name="Yamada K."/>
            <person name="Lim J."/>
            <person name="Dale J.M."/>
            <person name="Chen H."/>
            <person name="Shinn P."/>
            <person name="Palm C.J."/>
            <person name="Southwick A.M."/>
            <person name="Wu H.C."/>
            <person name="Kim C.J."/>
            <person name="Nguyen M."/>
            <person name="Pham P.K."/>
            <person name="Cheuk R.F."/>
            <person name="Karlin-Newmann G."/>
            <person name="Liu S.X."/>
            <person name="Lam B."/>
            <person name="Sakano H."/>
            <person name="Wu T."/>
            <person name="Yu G."/>
            <person name="Miranda M."/>
            <person name="Quach H.L."/>
            <person name="Tripp M."/>
            <person name="Chang C.H."/>
            <person name="Lee J.M."/>
            <person name="Toriumi M.J."/>
            <person name="Chan M.M."/>
            <person name="Tang C.C."/>
            <person name="Onodera C.S."/>
            <person name="Deng J.M."/>
            <person name="Akiyama K."/>
            <person name="Ansari Y."/>
            <person name="Arakawa T."/>
            <person name="Banh J."/>
            <person name="Banno F."/>
            <person name="Bowser L."/>
            <person name="Brooks S.Y."/>
            <person name="Carninci P."/>
            <person name="Chao Q."/>
            <person name="Choy N."/>
            <person name="Enju A."/>
            <person name="Goldsmith A.D."/>
            <person name="Gurjal M."/>
            <person name="Hansen N.F."/>
            <person name="Hayashizaki Y."/>
            <person name="Johnson-Hopson C."/>
            <person name="Hsuan V.W."/>
            <person name="Iida K."/>
            <person name="Karnes M."/>
            <person name="Khan S."/>
            <person name="Koesema E."/>
            <person name="Ishida J."/>
            <person name="Jiang P.X."/>
            <person name="Jones T."/>
            <person name="Kawai J."/>
            <person name="Kamiya A."/>
            <person name="Meyers C."/>
            <person name="Nakajima M."/>
            <person name="Narusaka M."/>
            <person name="Seki M."/>
            <person name="Sakurai T."/>
            <person name="Satou M."/>
            <person name="Tamse R."/>
            <person name="Vaysberg M."/>
            <person name="Wallender E.K."/>
            <person name="Wong C."/>
            <person name="Yamamura Y."/>
            <person name="Yuan S."/>
            <person name="Shinozaki K."/>
            <person name="Davis R.W."/>
            <person name="Theologis A."/>
            <person name="Ecker J.R."/>
        </authorList>
    </citation>
    <scope>NUCLEOTIDE SEQUENCE [LARGE SCALE MRNA]</scope>
    <source>
        <strain>cv. Columbia</strain>
    </source>
</reference>
<reference key="5">
    <citation type="journal article" date="2009" name="Mol. Cell">
        <title>Subunit compositions of the RNA-silencing enzymes Pol IV and Pol V reveal their origins as specialized forms of RNA polymerase II.</title>
        <authorList>
            <person name="Ream T.S."/>
            <person name="Haag J.R."/>
            <person name="Wierzbicki A.T."/>
            <person name="Nicora C.D."/>
            <person name="Norbeck A.D."/>
            <person name="Zhu J.K."/>
            <person name="Hagen G."/>
            <person name="Guilfoyle T.J."/>
            <person name="Pasa-Tolic L."/>
            <person name="Pikaard C.S."/>
        </authorList>
    </citation>
    <scope>FUNCTION</scope>
    <scope>IDENTIFICATION BY MASS SPECTROMETRY</scope>
    <scope>SUBUNIT</scope>
    <scope>NOMENCLATURE</scope>
</reference>
<reference key="6">
    <citation type="journal article" date="2011" name="Curr. Biol.">
        <title>A molecular switch for initiating cell differentiation in Arabidopsis.</title>
        <authorList>
            <person name="Sanmartin M."/>
            <person name="Sauer M."/>
            <person name="Munoz A."/>
            <person name="Zouhar J."/>
            <person name="Ordonez A."/>
            <person name="van de Ven W.T."/>
            <person name="Caro E."/>
            <person name="de la Paz Sanchez M."/>
            <person name="Raikhel N.V."/>
            <person name="Gutierrez C."/>
            <person name="Sanchez-Serrano J.J."/>
            <person name="Rojo E."/>
        </authorList>
    </citation>
    <scope>INTERACTION WITH IYO</scope>
</reference>
<reference key="7">
    <citation type="journal article" date="2011" name="PLoS Genet.">
        <title>SHH1, a homeodomain protein required for DNA methylation, as well as RDR2, RDM4, and chromatin remodeling factors, associate with RNA polymerase IV.</title>
        <authorList>
            <person name="Law J.A."/>
            <person name="Vashisht A.A."/>
            <person name="Wohlschlegel J.A."/>
            <person name="Jacobsen S.E."/>
        </authorList>
    </citation>
    <scope>IDENTIFICATION BY MASS SPECTROMETRY</scope>
    <scope>INTERACTION WITH NRPD1</scope>
    <scope>SUBUNIT</scope>
</reference>
<reference key="8">
    <citation type="journal article" date="2012" name="Mol. Cell. Proteomics">
        <title>Comparative large-scale characterisation of plant vs. mammal proteins reveals similar and idiosyncratic N-alpha acetylation features.</title>
        <authorList>
            <person name="Bienvenut W.V."/>
            <person name="Sumpton D."/>
            <person name="Martinez A."/>
            <person name="Lilla S."/>
            <person name="Espagne C."/>
            <person name="Meinnel T."/>
            <person name="Giglione C."/>
        </authorList>
    </citation>
    <scope>ACETYLATION [LARGE SCALE ANALYSIS] AT MET-1</scope>
    <scope>IDENTIFICATION BY MASS SPECTROMETRY [LARGE SCALE ANALYSIS]</scope>
</reference>
<reference key="9">
    <citation type="journal article" date="2013" name="Proc. Natl. Acad. Sci. U.S.A.">
        <title>DTF1 is a core component of RNA-directed DNA methylation and may assist in the recruitment of Pol IV.</title>
        <authorList>
            <person name="Zhang H."/>
            <person name="Ma Z.Y."/>
            <person name="Zeng L."/>
            <person name="Tanaka K."/>
            <person name="Zhang C.J."/>
            <person name="Ma J."/>
            <person name="Bai G."/>
            <person name="Wang P."/>
            <person name="Zhang S.W."/>
            <person name="Liu Z.W."/>
            <person name="Cai T."/>
            <person name="Tang K."/>
            <person name="Liu R."/>
            <person name="Shi X."/>
            <person name="He X.J."/>
            <person name="Zhu J.K."/>
        </authorList>
    </citation>
    <scope>IDENTIFICATION BY MASS SPECTROMETRY</scope>
    <scope>INTERACTION WITH SHH1 AND CLSY1</scope>
</reference>
<sequence length="319" mass="35461">MDGATYQRFPKIKIRELKDDYAKFELRETDVSMANALRRVMISEVPTVAIDLVEIEVNSSVLNDEFIAHRLGLIPLTSERAMSMRFSRDCDACDGDGQCEFCSVEFRLSSKCVTDQTLDVTSRDLYSADPTVTPVDFTIDSSVSDSSEHKGIIIVKLRRGQELKLRAIARKGIGKDHAKWSPAATVTFMYEPDIIINEDMMDTLSDEEKIDLIESSPTKVFGMDPVTRQVVVVDPEAYTYDEEVIKKAEAMGKPGLIEISPKDDSFIFTVESTGAVKASQLVLNAIDLLKQKLDAVRLSDDTVEADDQFGELGAHMRGG</sequence>
<dbReference type="EMBL" id="L34770">
    <property type="protein sequence ID" value="AAB03741.1"/>
    <property type="molecule type" value="Genomic_DNA"/>
</dbReference>
<dbReference type="EMBL" id="AC006920">
    <property type="protein sequence ID" value="AAD22281.1"/>
    <property type="molecule type" value="Genomic_DNA"/>
</dbReference>
<dbReference type="EMBL" id="CP002685">
    <property type="protein sequence ID" value="AEC06400.1"/>
    <property type="molecule type" value="Genomic_DNA"/>
</dbReference>
<dbReference type="EMBL" id="AY063965">
    <property type="protein sequence ID" value="AAL36321.1"/>
    <property type="molecule type" value="mRNA"/>
</dbReference>
<dbReference type="EMBL" id="AY096406">
    <property type="protein sequence ID" value="AAM20046.1"/>
    <property type="molecule type" value="mRNA"/>
</dbReference>
<dbReference type="PIR" id="S71176">
    <property type="entry name" value="S71176"/>
</dbReference>
<dbReference type="RefSeq" id="NP_179145.1">
    <property type="nucleotide sequence ID" value="NM_127103.3"/>
</dbReference>
<dbReference type="PDB" id="7EU0">
    <property type="method" value="EM"/>
    <property type="resolution" value="3.16 A"/>
    <property type="chains" value="C=1-319"/>
</dbReference>
<dbReference type="PDB" id="7EU1">
    <property type="method" value="EM"/>
    <property type="resolution" value="3.86 A"/>
    <property type="chains" value="C=1-319"/>
</dbReference>
<dbReference type="PDB" id="8XMB">
    <property type="method" value="EM"/>
    <property type="resolution" value="3.40 A"/>
    <property type="chains" value="C=1-319"/>
</dbReference>
<dbReference type="PDB" id="8XMC">
    <property type="method" value="EM"/>
    <property type="resolution" value="3.10 A"/>
    <property type="chains" value="C=1-319"/>
</dbReference>
<dbReference type="PDB" id="8XMD">
    <property type="method" value="EM"/>
    <property type="resolution" value="3.40 A"/>
    <property type="chains" value="C=1-319"/>
</dbReference>
<dbReference type="PDB" id="8XME">
    <property type="method" value="EM"/>
    <property type="resolution" value="3.10 A"/>
    <property type="chains" value="C=1-319"/>
</dbReference>
<dbReference type="PDBsum" id="7EU0"/>
<dbReference type="PDBsum" id="7EU1"/>
<dbReference type="PDBsum" id="8XMB"/>
<dbReference type="PDBsum" id="8XMC"/>
<dbReference type="PDBsum" id="8XMD"/>
<dbReference type="PDBsum" id="8XME"/>
<dbReference type="EMDB" id="EMD-31305"/>
<dbReference type="EMDB" id="EMD-31306"/>
<dbReference type="EMDB" id="EMD-38470"/>
<dbReference type="EMDB" id="EMD-38471"/>
<dbReference type="EMDB" id="EMD-38472"/>
<dbReference type="EMDB" id="EMD-38473"/>
<dbReference type="SMR" id="Q39211"/>
<dbReference type="BioGRID" id="1394">
    <property type="interactions" value="96"/>
</dbReference>
<dbReference type="FunCoup" id="Q39211">
    <property type="interactions" value="4480"/>
</dbReference>
<dbReference type="IntAct" id="Q39211">
    <property type="interactions" value="2"/>
</dbReference>
<dbReference type="STRING" id="3702.Q39211"/>
<dbReference type="iPTMnet" id="Q39211"/>
<dbReference type="PaxDb" id="3702-AT2G15430.1"/>
<dbReference type="ProteomicsDB" id="250602"/>
<dbReference type="EnsemblPlants" id="AT2G15430.1">
    <property type="protein sequence ID" value="AT2G15430.1"/>
    <property type="gene ID" value="AT2G15430"/>
</dbReference>
<dbReference type="GeneID" id="816035"/>
<dbReference type="Gramene" id="AT2G15430.1">
    <property type="protein sequence ID" value="AT2G15430.1"/>
    <property type="gene ID" value="AT2G15430"/>
</dbReference>
<dbReference type="KEGG" id="ath:AT2G15430"/>
<dbReference type="Araport" id="AT2G15430"/>
<dbReference type="TAIR" id="AT2G15430">
    <property type="gene designation" value="NRPB3"/>
</dbReference>
<dbReference type="eggNOG" id="KOG1522">
    <property type="taxonomic scope" value="Eukaryota"/>
</dbReference>
<dbReference type="HOGENOM" id="CLU_038421_3_0_1"/>
<dbReference type="InParanoid" id="Q39211"/>
<dbReference type="OMA" id="DETKFHF"/>
<dbReference type="OrthoDB" id="270173at2759"/>
<dbReference type="PhylomeDB" id="Q39211"/>
<dbReference type="CD-CODE" id="4299E36E">
    <property type="entry name" value="Nucleolus"/>
</dbReference>
<dbReference type="PRO" id="PR:Q39211"/>
<dbReference type="Proteomes" id="UP000006548">
    <property type="component" value="Chromosome 2"/>
</dbReference>
<dbReference type="ExpressionAtlas" id="Q39211">
    <property type="expression patterns" value="baseline and differential"/>
</dbReference>
<dbReference type="GO" id="GO:0005737">
    <property type="term" value="C:cytoplasm"/>
    <property type="evidence" value="ECO:0000314"/>
    <property type="project" value="TAIR"/>
</dbReference>
<dbReference type="GO" id="GO:0005730">
    <property type="term" value="C:nucleolus"/>
    <property type="evidence" value="ECO:0007005"/>
    <property type="project" value="TAIR"/>
</dbReference>
<dbReference type="GO" id="GO:0005634">
    <property type="term" value="C:nucleus"/>
    <property type="evidence" value="ECO:0000314"/>
    <property type="project" value="TAIR"/>
</dbReference>
<dbReference type="GO" id="GO:0005665">
    <property type="term" value="C:RNA polymerase II, core complex"/>
    <property type="evidence" value="ECO:0000314"/>
    <property type="project" value="UniProtKB"/>
</dbReference>
<dbReference type="GO" id="GO:0000418">
    <property type="term" value="C:RNA polymerase IV complex"/>
    <property type="evidence" value="ECO:0000314"/>
    <property type="project" value="UniProtKB"/>
</dbReference>
<dbReference type="GO" id="GO:0000419">
    <property type="term" value="C:RNA polymerase V complex"/>
    <property type="evidence" value="ECO:0000314"/>
    <property type="project" value="UniProtKB"/>
</dbReference>
<dbReference type="GO" id="GO:0003677">
    <property type="term" value="F:DNA binding"/>
    <property type="evidence" value="ECO:0007669"/>
    <property type="project" value="InterPro"/>
</dbReference>
<dbReference type="GO" id="GO:0003899">
    <property type="term" value="F:DNA-directed RNA polymerase activity"/>
    <property type="evidence" value="ECO:0007669"/>
    <property type="project" value="InterPro"/>
</dbReference>
<dbReference type="GO" id="GO:0046983">
    <property type="term" value="F:protein dimerization activity"/>
    <property type="evidence" value="ECO:0007669"/>
    <property type="project" value="InterPro"/>
</dbReference>
<dbReference type="GO" id="GO:0006351">
    <property type="term" value="P:DNA-templated transcription"/>
    <property type="evidence" value="ECO:0007669"/>
    <property type="project" value="InterPro"/>
</dbReference>
<dbReference type="GO" id="GO:0010374">
    <property type="term" value="P:stomatal complex development"/>
    <property type="evidence" value="ECO:0000315"/>
    <property type="project" value="TAIR"/>
</dbReference>
<dbReference type="GO" id="GO:0010375">
    <property type="term" value="P:stomatal complex patterning"/>
    <property type="evidence" value="ECO:0000315"/>
    <property type="project" value="TAIR"/>
</dbReference>
<dbReference type="CDD" id="cd07031">
    <property type="entry name" value="RNAP_II_RPB3"/>
    <property type="match status" value="1"/>
</dbReference>
<dbReference type="FunFam" id="2.170.120.12:FF:000005">
    <property type="entry name" value="DNA-directed RNA polymerase family protein"/>
    <property type="match status" value="1"/>
</dbReference>
<dbReference type="Gene3D" id="2.170.120.12">
    <property type="entry name" value="DNA-directed RNA polymerase, insert domain"/>
    <property type="match status" value="1"/>
</dbReference>
<dbReference type="Gene3D" id="3.30.1360.10">
    <property type="entry name" value="RNA polymerase, RBP11-like subunit"/>
    <property type="match status" value="1"/>
</dbReference>
<dbReference type="HAMAP" id="MF_00320">
    <property type="entry name" value="RNApol_arch_Rpo3"/>
    <property type="match status" value="1"/>
</dbReference>
<dbReference type="InterPro" id="IPR001514">
    <property type="entry name" value="DNA-dir_RNA_pol_30-40kDasu_CS"/>
</dbReference>
<dbReference type="InterPro" id="IPR011262">
    <property type="entry name" value="DNA-dir_RNA_pol_insert"/>
</dbReference>
<dbReference type="InterPro" id="IPR011263">
    <property type="entry name" value="DNA-dir_RNA_pol_RpoA/D/Rpb3"/>
</dbReference>
<dbReference type="InterPro" id="IPR036603">
    <property type="entry name" value="RBP11-like"/>
</dbReference>
<dbReference type="InterPro" id="IPR022842">
    <property type="entry name" value="RNAP_Rpo3/Rpb3/RPAC1"/>
</dbReference>
<dbReference type="InterPro" id="IPR036643">
    <property type="entry name" value="RNApol_insert_sf"/>
</dbReference>
<dbReference type="InterPro" id="IPR050518">
    <property type="entry name" value="Rpo3/RPB3_RNA_Pol_subunit"/>
</dbReference>
<dbReference type="NCBIfam" id="NF001988">
    <property type="entry name" value="PRK00783.1"/>
    <property type="match status" value="1"/>
</dbReference>
<dbReference type="PANTHER" id="PTHR11800">
    <property type="entry name" value="DNA-DIRECTED RNA POLYMERASE"/>
    <property type="match status" value="1"/>
</dbReference>
<dbReference type="PANTHER" id="PTHR11800:SF2">
    <property type="entry name" value="DNA-DIRECTED RNA POLYMERASE II SUBUNIT RPB3"/>
    <property type="match status" value="1"/>
</dbReference>
<dbReference type="Pfam" id="PF01000">
    <property type="entry name" value="RNA_pol_A_bac"/>
    <property type="match status" value="1"/>
</dbReference>
<dbReference type="Pfam" id="PF01193">
    <property type="entry name" value="RNA_pol_L"/>
    <property type="match status" value="1"/>
</dbReference>
<dbReference type="SMART" id="SM00662">
    <property type="entry name" value="RPOLD"/>
    <property type="match status" value="1"/>
</dbReference>
<dbReference type="SUPFAM" id="SSF56553">
    <property type="entry name" value="Insert subdomain of RNA polymerase alpha subunit"/>
    <property type="match status" value="1"/>
</dbReference>
<dbReference type="SUPFAM" id="SSF55257">
    <property type="entry name" value="RBP11-like subunits of RNA polymerase"/>
    <property type="match status" value="1"/>
</dbReference>
<dbReference type="PROSITE" id="PS00446">
    <property type="entry name" value="RNA_POL_D_30KD"/>
    <property type="match status" value="1"/>
</dbReference>
<gene>
    <name type="primary">NRPB3</name>
    <name type="synonym">NRPD3</name>
    <name type="synonym">NRPE3A</name>
    <name type="synonym">RPB36A</name>
    <name type="ordered locus">At2g15430</name>
    <name type="ORF">F26H6.5</name>
</gene>
<evidence type="ECO:0000269" key="1">
    <source>
    </source>
</evidence>
<evidence type="ECO:0000269" key="2">
    <source>
    </source>
</evidence>
<evidence type="ECO:0000269" key="3">
    <source>
    </source>
</evidence>
<evidence type="ECO:0000269" key="4">
    <source>
    </source>
</evidence>
<evidence type="ECO:0000269" key="5">
    <source>
    </source>
</evidence>
<evidence type="ECO:0000305" key="6"/>
<evidence type="ECO:0007744" key="7">
    <source>
    </source>
</evidence>
<evidence type="ECO:0007829" key="8">
    <source>
        <dbReference type="PDB" id="7EU0"/>
    </source>
</evidence>
<evidence type="ECO:0007829" key="9">
    <source>
        <dbReference type="PDB" id="8XMD"/>
    </source>
</evidence>
<comment type="function">
    <text evidence="1">DNA-dependent RNA polymerase catalyzes the transcription of DNA into RNA using the four ribonucleoside triphosphates as substrates. Component of RNA polymerase II which synthesizes mRNA precursors and many functional non-coding RNAs. Pol II is the central component of the basal RNA polymerase II transcription machinery. It is composed of mobile elements that move relative to each other. NRPB3 is part of the core element with the central large cleft and the clamp element that moves to open and close the cleft. Component of RNA polymerases IV and V which mediate short-interfering RNAs (siRNA) accumulation and subsequent RNA-directed DNA methylation-dependent (RdDM) transcriptional gene silencing (TGS) of endogenous repeated sequences, including transposable elements.</text>
</comment>
<comment type="subunit">
    <text evidence="1 2 3 4 5">Component of the RNA polymerase II complex consisting of at least 12 subunits. Interacts with SHH1, CLSY1, NRPB11 and NRPD1 (PubMed:19110459, PubMed:21811420, PubMed:23637343, PubMed:8617787). Interacts with IYO (PubMed:21620701).</text>
</comment>
<comment type="subcellular location">
    <subcellularLocation>
        <location>Nucleus</location>
    </subcellularLocation>
</comment>
<comment type="similarity">
    <text evidence="6">Belongs to the archaeal Rpo3/eukaryotic RPB3 RNA polymerase subunit family.</text>
</comment>
<keyword id="KW-0002">3D-structure</keyword>
<keyword id="KW-0007">Acetylation</keyword>
<keyword id="KW-0240">DNA-directed RNA polymerase</keyword>
<keyword id="KW-0539">Nucleus</keyword>
<keyword id="KW-1185">Reference proteome</keyword>
<keyword id="KW-0804">Transcription</keyword>
<name>NRPB3_ARATH</name>